<sequence length="77" mass="8359">MAEVLEKVTKIIVDRLGVEESKVTLEASFKEDLGADSLDVVELVMELEDEFGVEISDGDAENINTVGDAVKYIEANA</sequence>
<organism>
    <name type="scientific">Listeria monocytogenes serotype 4b (strain CLIP80459)</name>
    <dbReference type="NCBI Taxonomy" id="568819"/>
    <lineage>
        <taxon>Bacteria</taxon>
        <taxon>Bacillati</taxon>
        <taxon>Bacillota</taxon>
        <taxon>Bacilli</taxon>
        <taxon>Bacillales</taxon>
        <taxon>Listeriaceae</taxon>
        <taxon>Listeria</taxon>
    </lineage>
</organism>
<proteinExistence type="inferred from homology"/>
<comment type="function">
    <text evidence="1">Carrier of the growing fatty acid chain in fatty acid biosynthesis.</text>
</comment>
<comment type="pathway">
    <text evidence="1">Lipid metabolism; fatty acid biosynthesis.</text>
</comment>
<comment type="subcellular location">
    <subcellularLocation>
        <location evidence="1">Cytoplasm</location>
    </subcellularLocation>
</comment>
<comment type="PTM">
    <text evidence="1">4'-phosphopantetheine is transferred from CoA to a specific serine of apo-ACP by AcpS. This modification is essential for activity because fatty acids are bound in thioester linkage to the sulfhydryl of the prosthetic group.</text>
</comment>
<comment type="similarity">
    <text evidence="1">Belongs to the acyl carrier protein (ACP) family.</text>
</comment>
<gene>
    <name evidence="1" type="primary">acpP</name>
    <name type="ordered locus">Lm4b_01822</name>
</gene>
<evidence type="ECO:0000255" key="1">
    <source>
        <dbReference type="HAMAP-Rule" id="MF_01217"/>
    </source>
</evidence>
<evidence type="ECO:0000255" key="2">
    <source>
        <dbReference type="PROSITE-ProRule" id="PRU00258"/>
    </source>
</evidence>
<reference key="1">
    <citation type="journal article" date="2012" name="BMC Genomics">
        <title>Comparative genomics and transcriptomics of lineages I, II, and III strains of Listeria monocytogenes.</title>
        <authorList>
            <person name="Hain T."/>
            <person name="Ghai R."/>
            <person name="Billion A."/>
            <person name="Kuenne C.T."/>
            <person name="Steinweg C."/>
            <person name="Izar B."/>
            <person name="Mohamed W."/>
            <person name="Mraheil M."/>
            <person name="Domann E."/>
            <person name="Schaffrath S."/>
            <person name="Karst U."/>
            <person name="Goesmann A."/>
            <person name="Oehm S."/>
            <person name="Puhler A."/>
            <person name="Merkl R."/>
            <person name="Vorwerk S."/>
            <person name="Glaser P."/>
            <person name="Garrido P."/>
            <person name="Rusniok C."/>
            <person name="Buchrieser C."/>
            <person name="Goebel W."/>
            <person name="Chakraborty T."/>
        </authorList>
    </citation>
    <scope>NUCLEOTIDE SEQUENCE [LARGE SCALE GENOMIC DNA]</scope>
    <source>
        <strain>CLIP80459</strain>
    </source>
</reference>
<keyword id="KW-0963">Cytoplasm</keyword>
<keyword id="KW-0275">Fatty acid biosynthesis</keyword>
<keyword id="KW-0276">Fatty acid metabolism</keyword>
<keyword id="KW-0444">Lipid biosynthesis</keyword>
<keyword id="KW-0443">Lipid metabolism</keyword>
<keyword id="KW-0596">Phosphopantetheine</keyword>
<keyword id="KW-0597">Phosphoprotein</keyword>
<feature type="chain" id="PRO_1000213912" description="Acyl carrier protein">
    <location>
        <begin position="1"/>
        <end position="77"/>
    </location>
</feature>
<feature type="domain" description="Carrier" evidence="2">
    <location>
        <begin position="2"/>
        <end position="77"/>
    </location>
</feature>
<feature type="modified residue" description="O-(pantetheine 4'-phosphoryl)serine" evidence="2">
    <location>
        <position position="37"/>
    </location>
</feature>
<accession>C1KWA5</accession>
<dbReference type="EMBL" id="FM242711">
    <property type="protein sequence ID" value="CAS05580.1"/>
    <property type="molecule type" value="Genomic_DNA"/>
</dbReference>
<dbReference type="RefSeq" id="WP_003723866.1">
    <property type="nucleotide sequence ID" value="NC_012488.1"/>
</dbReference>
<dbReference type="SMR" id="C1KWA5"/>
<dbReference type="KEGG" id="lmc:Lm4b_01822"/>
<dbReference type="HOGENOM" id="CLU_108696_5_3_9"/>
<dbReference type="UniPathway" id="UPA00094"/>
<dbReference type="GO" id="GO:0005829">
    <property type="term" value="C:cytosol"/>
    <property type="evidence" value="ECO:0007669"/>
    <property type="project" value="TreeGrafter"/>
</dbReference>
<dbReference type="GO" id="GO:0016020">
    <property type="term" value="C:membrane"/>
    <property type="evidence" value="ECO:0007669"/>
    <property type="project" value="GOC"/>
</dbReference>
<dbReference type="GO" id="GO:0000035">
    <property type="term" value="F:acyl binding"/>
    <property type="evidence" value="ECO:0007669"/>
    <property type="project" value="TreeGrafter"/>
</dbReference>
<dbReference type="GO" id="GO:0000036">
    <property type="term" value="F:acyl carrier activity"/>
    <property type="evidence" value="ECO:0007669"/>
    <property type="project" value="UniProtKB-UniRule"/>
</dbReference>
<dbReference type="GO" id="GO:0009245">
    <property type="term" value="P:lipid A biosynthetic process"/>
    <property type="evidence" value="ECO:0007669"/>
    <property type="project" value="TreeGrafter"/>
</dbReference>
<dbReference type="FunFam" id="1.10.1200.10:FF:000001">
    <property type="entry name" value="Acyl carrier protein"/>
    <property type="match status" value="1"/>
</dbReference>
<dbReference type="Gene3D" id="1.10.1200.10">
    <property type="entry name" value="ACP-like"/>
    <property type="match status" value="1"/>
</dbReference>
<dbReference type="HAMAP" id="MF_01217">
    <property type="entry name" value="Acyl_carrier"/>
    <property type="match status" value="1"/>
</dbReference>
<dbReference type="InterPro" id="IPR003231">
    <property type="entry name" value="ACP"/>
</dbReference>
<dbReference type="InterPro" id="IPR036736">
    <property type="entry name" value="ACP-like_sf"/>
</dbReference>
<dbReference type="InterPro" id="IPR009081">
    <property type="entry name" value="PP-bd_ACP"/>
</dbReference>
<dbReference type="InterPro" id="IPR006162">
    <property type="entry name" value="Ppantetheine_attach_site"/>
</dbReference>
<dbReference type="NCBIfam" id="TIGR00517">
    <property type="entry name" value="acyl_carrier"/>
    <property type="match status" value="1"/>
</dbReference>
<dbReference type="NCBIfam" id="NF002148">
    <property type="entry name" value="PRK00982.1-2"/>
    <property type="match status" value="1"/>
</dbReference>
<dbReference type="NCBIfam" id="NF002150">
    <property type="entry name" value="PRK00982.1-4"/>
    <property type="match status" value="1"/>
</dbReference>
<dbReference type="NCBIfam" id="NF002151">
    <property type="entry name" value="PRK00982.1-5"/>
    <property type="match status" value="1"/>
</dbReference>
<dbReference type="PANTHER" id="PTHR20863">
    <property type="entry name" value="ACYL CARRIER PROTEIN"/>
    <property type="match status" value="1"/>
</dbReference>
<dbReference type="PANTHER" id="PTHR20863:SF76">
    <property type="entry name" value="CARRIER DOMAIN-CONTAINING PROTEIN"/>
    <property type="match status" value="1"/>
</dbReference>
<dbReference type="Pfam" id="PF00550">
    <property type="entry name" value="PP-binding"/>
    <property type="match status" value="1"/>
</dbReference>
<dbReference type="SUPFAM" id="SSF47336">
    <property type="entry name" value="ACP-like"/>
    <property type="match status" value="1"/>
</dbReference>
<dbReference type="PROSITE" id="PS50075">
    <property type="entry name" value="CARRIER"/>
    <property type="match status" value="1"/>
</dbReference>
<dbReference type="PROSITE" id="PS00012">
    <property type="entry name" value="PHOSPHOPANTETHEINE"/>
    <property type="match status" value="1"/>
</dbReference>
<name>ACP_LISMC</name>
<protein>
    <recommendedName>
        <fullName evidence="1">Acyl carrier protein</fullName>
        <shortName evidence="1">ACP</shortName>
    </recommendedName>
</protein>